<evidence type="ECO:0000255" key="1">
    <source>
        <dbReference type="HAMAP-Rule" id="MF_00140"/>
    </source>
</evidence>
<gene>
    <name evidence="1" type="primary">trpS</name>
    <name type="ordered locus">Lxx04450</name>
</gene>
<accession>Q6AGQ7</accession>
<organism>
    <name type="scientific">Leifsonia xyli subsp. xyli (strain CTCB07)</name>
    <dbReference type="NCBI Taxonomy" id="281090"/>
    <lineage>
        <taxon>Bacteria</taxon>
        <taxon>Bacillati</taxon>
        <taxon>Actinomycetota</taxon>
        <taxon>Actinomycetes</taxon>
        <taxon>Micrococcales</taxon>
        <taxon>Microbacteriaceae</taxon>
        <taxon>Leifsonia</taxon>
    </lineage>
</organism>
<protein>
    <recommendedName>
        <fullName evidence="1">Tryptophan--tRNA ligase</fullName>
        <ecNumber evidence="1">6.1.1.2</ecNumber>
    </recommendedName>
    <alternativeName>
        <fullName evidence="1">Tryptophanyl-tRNA synthetase</fullName>
        <shortName evidence="1">TrpRS</shortName>
    </alternativeName>
</protein>
<comment type="function">
    <text evidence="1">Catalyzes the attachment of tryptophan to tRNA(Trp).</text>
</comment>
<comment type="catalytic activity">
    <reaction evidence="1">
        <text>tRNA(Trp) + L-tryptophan + ATP = L-tryptophyl-tRNA(Trp) + AMP + diphosphate + H(+)</text>
        <dbReference type="Rhea" id="RHEA:24080"/>
        <dbReference type="Rhea" id="RHEA-COMP:9671"/>
        <dbReference type="Rhea" id="RHEA-COMP:9705"/>
        <dbReference type="ChEBI" id="CHEBI:15378"/>
        <dbReference type="ChEBI" id="CHEBI:30616"/>
        <dbReference type="ChEBI" id="CHEBI:33019"/>
        <dbReference type="ChEBI" id="CHEBI:57912"/>
        <dbReference type="ChEBI" id="CHEBI:78442"/>
        <dbReference type="ChEBI" id="CHEBI:78535"/>
        <dbReference type="ChEBI" id="CHEBI:456215"/>
        <dbReference type="EC" id="6.1.1.2"/>
    </reaction>
</comment>
<comment type="subunit">
    <text evidence="1">Homodimer.</text>
</comment>
<comment type="subcellular location">
    <subcellularLocation>
        <location evidence="1">Cytoplasm</location>
    </subcellularLocation>
</comment>
<comment type="similarity">
    <text evidence="1">Belongs to the class-I aminoacyl-tRNA synthetase family.</text>
</comment>
<dbReference type="EC" id="6.1.1.2" evidence="1"/>
<dbReference type="EMBL" id="AE016822">
    <property type="protein sequence ID" value="AAT88438.1"/>
    <property type="molecule type" value="Genomic_DNA"/>
</dbReference>
<dbReference type="RefSeq" id="WP_011185439.1">
    <property type="nucleotide sequence ID" value="NC_006087.1"/>
</dbReference>
<dbReference type="SMR" id="Q6AGQ7"/>
<dbReference type="STRING" id="281090.Lxx04450"/>
<dbReference type="KEGG" id="lxx:Lxx04450"/>
<dbReference type="eggNOG" id="COG0180">
    <property type="taxonomic scope" value="Bacteria"/>
</dbReference>
<dbReference type="HOGENOM" id="CLU_029244_1_1_11"/>
<dbReference type="Proteomes" id="UP000001306">
    <property type="component" value="Chromosome"/>
</dbReference>
<dbReference type="GO" id="GO:0005829">
    <property type="term" value="C:cytosol"/>
    <property type="evidence" value="ECO:0007669"/>
    <property type="project" value="TreeGrafter"/>
</dbReference>
<dbReference type="GO" id="GO:0005524">
    <property type="term" value="F:ATP binding"/>
    <property type="evidence" value="ECO:0007669"/>
    <property type="project" value="UniProtKB-UniRule"/>
</dbReference>
<dbReference type="GO" id="GO:0004830">
    <property type="term" value="F:tryptophan-tRNA ligase activity"/>
    <property type="evidence" value="ECO:0007669"/>
    <property type="project" value="UniProtKB-UniRule"/>
</dbReference>
<dbReference type="GO" id="GO:0006436">
    <property type="term" value="P:tryptophanyl-tRNA aminoacylation"/>
    <property type="evidence" value="ECO:0007669"/>
    <property type="project" value="UniProtKB-UniRule"/>
</dbReference>
<dbReference type="CDD" id="cd00806">
    <property type="entry name" value="TrpRS_core"/>
    <property type="match status" value="1"/>
</dbReference>
<dbReference type="FunFam" id="1.10.240.10:FF:000002">
    <property type="entry name" value="Tryptophan--tRNA ligase"/>
    <property type="match status" value="1"/>
</dbReference>
<dbReference type="Gene3D" id="3.40.50.620">
    <property type="entry name" value="HUPs"/>
    <property type="match status" value="1"/>
</dbReference>
<dbReference type="Gene3D" id="1.10.240.10">
    <property type="entry name" value="Tyrosyl-Transfer RNA Synthetase"/>
    <property type="match status" value="1"/>
</dbReference>
<dbReference type="HAMAP" id="MF_00140_B">
    <property type="entry name" value="Trp_tRNA_synth_B"/>
    <property type="match status" value="1"/>
</dbReference>
<dbReference type="InterPro" id="IPR001412">
    <property type="entry name" value="aa-tRNA-synth_I_CS"/>
</dbReference>
<dbReference type="InterPro" id="IPR002305">
    <property type="entry name" value="aa-tRNA-synth_Ic"/>
</dbReference>
<dbReference type="InterPro" id="IPR014729">
    <property type="entry name" value="Rossmann-like_a/b/a_fold"/>
</dbReference>
<dbReference type="InterPro" id="IPR002306">
    <property type="entry name" value="Trp-tRNA-ligase"/>
</dbReference>
<dbReference type="InterPro" id="IPR024109">
    <property type="entry name" value="Trp-tRNA-ligase_bac-type"/>
</dbReference>
<dbReference type="InterPro" id="IPR050203">
    <property type="entry name" value="Trp-tRNA_synthetase"/>
</dbReference>
<dbReference type="NCBIfam" id="TIGR00233">
    <property type="entry name" value="trpS"/>
    <property type="match status" value="1"/>
</dbReference>
<dbReference type="PANTHER" id="PTHR43766">
    <property type="entry name" value="TRYPTOPHAN--TRNA LIGASE, MITOCHONDRIAL"/>
    <property type="match status" value="1"/>
</dbReference>
<dbReference type="PANTHER" id="PTHR43766:SF1">
    <property type="entry name" value="TRYPTOPHAN--TRNA LIGASE, MITOCHONDRIAL"/>
    <property type="match status" value="1"/>
</dbReference>
<dbReference type="Pfam" id="PF00579">
    <property type="entry name" value="tRNA-synt_1b"/>
    <property type="match status" value="1"/>
</dbReference>
<dbReference type="PRINTS" id="PR01039">
    <property type="entry name" value="TRNASYNTHTRP"/>
</dbReference>
<dbReference type="SUPFAM" id="SSF52374">
    <property type="entry name" value="Nucleotidylyl transferase"/>
    <property type="match status" value="1"/>
</dbReference>
<dbReference type="PROSITE" id="PS00178">
    <property type="entry name" value="AA_TRNA_LIGASE_I"/>
    <property type="match status" value="1"/>
</dbReference>
<feature type="chain" id="PRO_0000136641" description="Tryptophan--tRNA ligase">
    <location>
        <begin position="1"/>
        <end position="337"/>
    </location>
</feature>
<feature type="short sequence motif" description="'HIGH' region" evidence="1">
    <location>
        <begin position="13"/>
        <end position="22"/>
    </location>
</feature>
<feature type="short sequence motif" description="'KMSKS' region" evidence="1">
    <location>
        <begin position="198"/>
        <end position="202"/>
    </location>
</feature>
<feature type="binding site" evidence="1">
    <location>
        <begin position="12"/>
        <end position="14"/>
    </location>
    <ligand>
        <name>ATP</name>
        <dbReference type="ChEBI" id="CHEBI:30616"/>
    </ligand>
</feature>
<feature type="binding site" evidence="1">
    <location>
        <begin position="21"/>
        <end position="22"/>
    </location>
    <ligand>
        <name>ATP</name>
        <dbReference type="ChEBI" id="CHEBI:30616"/>
    </ligand>
</feature>
<feature type="binding site" evidence="1">
    <location>
        <position position="138"/>
    </location>
    <ligand>
        <name>L-tryptophan</name>
        <dbReference type="ChEBI" id="CHEBI:57912"/>
    </ligand>
</feature>
<feature type="binding site" evidence="1">
    <location>
        <begin position="150"/>
        <end position="152"/>
    </location>
    <ligand>
        <name>ATP</name>
        <dbReference type="ChEBI" id="CHEBI:30616"/>
    </ligand>
</feature>
<feature type="binding site" evidence="1">
    <location>
        <position position="189"/>
    </location>
    <ligand>
        <name>ATP</name>
        <dbReference type="ChEBI" id="CHEBI:30616"/>
    </ligand>
</feature>
<feature type="binding site" evidence="1">
    <location>
        <begin position="198"/>
        <end position="202"/>
    </location>
    <ligand>
        <name>ATP</name>
        <dbReference type="ChEBI" id="CHEBI:30616"/>
    </ligand>
</feature>
<proteinExistence type="inferred from homology"/>
<sequence length="337" mass="36667">MTDSPRLYSGMQPSADSLHLGNYVGALLQWKELQAAHDAFFSVVDLHAITVAQDPHDLREKTRRTAAQYIAAGIDPSVSTLYVQSHVPAHAQLAWVLSTITGYGEAARMTQFKDKSAKQGAEATSVGLFTYPVLMAADILLFDADVVPVGDDQRQHVELTRDLAERFNSRFGETFVVPQAMILKDGARIYDLQSPESKMSKSADSGAGIVWLLDEPDIARKKIMRAVTDTDGVVSYDRAGKPGVSNLLSIYSALSGRAIQQIELDYEGKGYGDFKKGLVEVVVDALGPIRERTLELLADPAELDRILAGNAARAGEAAEITLAKAYEAIGFLQPTRR</sequence>
<keyword id="KW-0030">Aminoacyl-tRNA synthetase</keyword>
<keyword id="KW-0067">ATP-binding</keyword>
<keyword id="KW-0963">Cytoplasm</keyword>
<keyword id="KW-0436">Ligase</keyword>
<keyword id="KW-0547">Nucleotide-binding</keyword>
<keyword id="KW-0648">Protein biosynthesis</keyword>
<keyword id="KW-1185">Reference proteome</keyword>
<reference key="1">
    <citation type="journal article" date="2004" name="Mol. Plant Microbe Interact.">
        <title>The genome sequence of the Gram-positive sugarcane pathogen Leifsonia xyli subsp. xyli.</title>
        <authorList>
            <person name="Monteiro-Vitorello C.B."/>
            <person name="Camargo L.E.A."/>
            <person name="Van Sluys M.A."/>
            <person name="Kitajima J.P."/>
            <person name="Truffi D."/>
            <person name="do Amaral A.M."/>
            <person name="Harakava R."/>
            <person name="de Oliveira J.C.F."/>
            <person name="Wood D."/>
            <person name="de Oliveira M.C."/>
            <person name="Miyaki C.Y."/>
            <person name="Takita M.A."/>
            <person name="da Silva A.C.R."/>
            <person name="Furlan L.R."/>
            <person name="Carraro D.M."/>
            <person name="Camarotte G."/>
            <person name="Almeida N.F. Jr."/>
            <person name="Carrer H."/>
            <person name="Coutinho L.L."/>
            <person name="El-Dorry H.A."/>
            <person name="Ferro M.I.T."/>
            <person name="Gagliardi P.R."/>
            <person name="Giglioti E."/>
            <person name="Goldman M.H.S."/>
            <person name="Goldman G.H."/>
            <person name="Kimura E.T."/>
            <person name="Ferro E.S."/>
            <person name="Kuramae E.E."/>
            <person name="Lemos E.G.M."/>
            <person name="Lemos M.V.F."/>
            <person name="Mauro S.M.Z."/>
            <person name="Machado M.A."/>
            <person name="Marino C.L."/>
            <person name="Menck C.F."/>
            <person name="Nunes L.R."/>
            <person name="Oliveira R.C."/>
            <person name="Pereira G.G."/>
            <person name="Siqueira W."/>
            <person name="de Souza A.A."/>
            <person name="Tsai S.M."/>
            <person name="Zanca A.S."/>
            <person name="Simpson A.J.G."/>
            <person name="Brumbley S.M."/>
            <person name="Setubal J.C."/>
        </authorList>
    </citation>
    <scope>NUCLEOTIDE SEQUENCE [LARGE SCALE GENOMIC DNA]</scope>
    <source>
        <strain>CTCB07</strain>
    </source>
</reference>
<name>SYW_LEIXX</name>